<accession>B8D9X6</accession>
<comment type="function">
    <text evidence="1">Provides the (R)-glutamate required for cell wall biosynthesis.</text>
</comment>
<comment type="catalytic activity">
    <reaction evidence="1">
        <text>L-glutamate = D-glutamate</text>
        <dbReference type="Rhea" id="RHEA:12813"/>
        <dbReference type="ChEBI" id="CHEBI:29985"/>
        <dbReference type="ChEBI" id="CHEBI:29986"/>
        <dbReference type="EC" id="5.1.1.3"/>
    </reaction>
</comment>
<comment type="pathway">
    <text evidence="1">Cell wall biogenesis; peptidoglycan biosynthesis.</text>
</comment>
<comment type="similarity">
    <text evidence="1">Belongs to the aspartate/glutamate racemases family.</text>
</comment>
<reference key="1">
    <citation type="journal article" date="2009" name="Science">
        <title>The dynamics and time scale of ongoing genomic erosion in symbiotic bacteria.</title>
        <authorList>
            <person name="Moran N.A."/>
            <person name="McLaughlin H.J."/>
            <person name="Sorek R."/>
        </authorList>
    </citation>
    <scope>NUCLEOTIDE SEQUENCE [LARGE SCALE GENOMIC DNA]</scope>
    <source>
        <strain>5A</strain>
    </source>
</reference>
<feature type="chain" id="PRO_1000125604" description="Glutamate racemase">
    <location>
        <begin position="1"/>
        <end position="262"/>
    </location>
</feature>
<feature type="active site" description="Proton donor/acceptor" evidence="1">
    <location>
        <position position="69"/>
    </location>
</feature>
<feature type="active site" description="Proton donor/acceptor" evidence="1">
    <location>
        <position position="181"/>
    </location>
</feature>
<feature type="binding site" evidence="1">
    <location>
        <begin position="5"/>
        <end position="6"/>
    </location>
    <ligand>
        <name>substrate</name>
    </ligand>
</feature>
<feature type="binding site" evidence="1">
    <location>
        <begin position="37"/>
        <end position="38"/>
    </location>
    <ligand>
        <name>substrate</name>
    </ligand>
</feature>
<feature type="binding site" evidence="1">
    <location>
        <begin position="70"/>
        <end position="71"/>
    </location>
    <ligand>
        <name>substrate</name>
    </ligand>
</feature>
<feature type="binding site" evidence="1">
    <location>
        <begin position="182"/>
        <end position="183"/>
    </location>
    <ligand>
        <name>substrate</name>
    </ligand>
</feature>
<protein>
    <recommendedName>
        <fullName evidence="1">Glutamate racemase</fullName>
        <ecNumber evidence="1">5.1.1.3</ecNumber>
    </recommendedName>
</protein>
<evidence type="ECO:0000255" key="1">
    <source>
        <dbReference type="HAMAP-Rule" id="MF_00258"/>
    </source>
</evidence>
<name>MURI_BUCA5</name>
<dbReference type="EC" id="5.1.1.3" evidence="1"/>
<dbReference type="EMBL" id="CP001161">
    <property type="protein sequence ID" value="ACL30897.1"/>
    <property type="molecule type" value="Genomic_DNA"/>
</dbReference>
<dbReference type="RefSeq" id="WP_009874504.1">
    <property type="nucleotide sequence ID" value="NC_011833.1"/>
</dbReference>
<dbReference type="SMR" id="B8D9X6"/>
<dbReference type="KEGG" id="bap:BUAP5A_547"/>
<dbReference type="HOGENOM" id="CLU_052344_2_2_6"/>
<dbReference type="OrthoDB" id="9801055at2"/>
<dbReference type="UniPathway" id="UPA00219"/>
<dbReference type="Proteomes" id="UP000006904">
    <property type="component" value="Chromosome"/>
</dbReference>
<dbReference type="GO" id="GO:0008881">
    <property type="term" value="F:glutamate racemase activity"/>
    <property type="evidence" value="ECO:0007669"/>
    <property type="project" value="UniProtKB-UniRule"/>
</dbReference>
<dbReference type="GO" id="GO:0071555">
    <property type="term" value="P:cell wall organization"/>
    <property type="evidence" value="ECO:0007669"/>
    <property type="project" value="UniProtKB-KW"/>
</dbReference>
<dbReference type="GO" id="GO:0009252">
    <property type="term" value="P:peptidoglycan biosynthetic process"/>
    <property type="evidence" value="ECO:0007669"/>
    <property type="project" value="UniProtKB-UniRule"/>
</dbReference>
<dbReference type="GO" id="GO:0008360">
    <property type="term" value="P:regulation of cell shape"/>
    <property type="evidence" value="ECO:0007669"/>
    <property type="project" value="UniProtKB-KW"/>
</dbReference>
<dbReference type="Gene3D" id="3.40.50.1860">
    <property type="match status" value="2"/>
</dbReference>
<dbReference type="HAMAP" id="MF_00258">
    <property type="entry name" value="Glu_racemase"/>
    <property type="match status" value="1"/>
</dbReference>
<dbReference type="InterPro" id="IPR015942">
    <property type="entry name" value="Asp/Glu/hydantoin_racemase"/>
</dbReference>
<dbReference type="InterPro" id="IPR001920">
    <property type="entry name" value="Asp/Glu_race"/>
</dbReference>
<dbReference type="InterPro" id="IPR033134">
    <property type="entry name" value="Asp/Glu_racemase_AS_2"/>
</dbReference>
<dbReference type="InterPro" id="IPR004391">
    <property type="entry name" value="Glu_race"/>
</dbReference>
<dbReference type="NCBIfam" id="TIGR00067">
    <property type="entry name" value="glut_race"/>
    <property type="match status" value="1"/>
</dbReference>
<dbReference type="PANTHER" id="PTHR21198">
    <property type="entry name" value="GLUTAMATE RACEMASE"/>
    <property type="match status" value="1"/>
</dbReference>
<dbReference type="PANTHER" id="PTHR21198:SF2">
    <property type="entry name" value="GLUTAMATE RACEMASE"/>
    <property type="match status" value="1"/>
</dbReference>
<dbReference type="Pfam" id="PF01177">
    <property type="entry name" value="Asp_Glu_race"/>
    <property type="match status" value="1"/>
</dbReference>
<dbReference type="SUPFAM" id="SSF53681">
    <property type="entry name" value="Aspartate/glutamate racemase"/>
    <property type="match status" value="2"/>
</dbReference>
<dbReference type="PROSITE" id="PS00924">
    <property type="entry name" value="ASP_GLU_RACEMASE_2"/>
    <property type="match status" value="1"/>
</dbReference>
<keyword id="KW-0133">Cell shape</keyword>
<keyword id="KW-0961">Cell wall biogenesis/degradation</keyword>
<keyword id="KW-0413">Isomerase</keyword>
<keyword id="KW-0573">Peptidoglycan synthesis</keyword>
<proteinExistence type="inferred from homology"/>
<gene>
    <name evidence="1" type="primary">murI</name>
    <name type="ordered locus">BUAP5A_547</name>
</gene>
<sequence>MLIFDSGVGGLSILKNIKKILPNIHYIYMLDNESFPYGNKTEFFIIQRSIKIIHTIKKIYPINIVVIACNTISTVALSILREKFDIPIFGIFPHIKAAEKITKNKIIGLIATKATINSSYTQKTIYEYSCSNTIKIIGTNKLAVIAEKKIRGVAVSQKKLKNIFRPWINLPTCPDTIILGCTHFSLLEKEIKNILYKTRSVYFIDSIKKVIFQIKSYLKTSNVNQKIKKNIFLYSKNNNNLKKLLSFLKQYKFTVIKHINLN</sequence>
<organism>
    <name type="scientific">Buchnera aphidicola subsp. Acyrthosiphon pisum (strain 5A)</name>
    <dbReference type="NCBI Taxonomy" id="563178"/>
    <lineage>
        <taxon>Bacteria</taxon>
        <taxon>Pseudomonadati</taxon>
        <taxon>Pseudomonadota</taxon>
        <taxon>Gammaproteobacteria</taxon>
        <taxon>Enterobacterales</taxon>
        <taxon>Erwiniaceae</taxon>
        <taxon>Buchnera</taxon>
    </lineage>
</organism>